<dbReference type="EC" id="5.3.1.5" evidence="1"/>
<dbReference type="EMBL" id="AE014075">
    <property type="protein sequence ID" value="AAN82821.1"/>
    <property type="status" value="ALT_INIT"/>
    <property type="molecule type" value="Genomic_DNA"/>
</dbReference>
<dbReference type="RefSeq" id="WP_001149592.1">
    <property type="nucleotide sequence ID" value="NZ_CP051263.1"/>
</dbReference>
<dbReference type="SMR" id="Q8FCE3"/>
<dbReference type="STRING" id="199310.c4385"/>
<dbReference type="GeneID" id="75173765"/>
<dbReference type="KEGG" id="ecc:c4385"/>
<dbReference type="eggNOG" id="COG2115">
    <property type="taxonomic scope" value="Bacteria"/>
</dbReference>
<dbReference type="HOGENOM" id="CLU_037261_1_0_6"/>
<dbReference type="Proteomes" id="UP000001410">
    <property type="component" value="Chromosome"/>
</dbReference>
<dbReference type="GO" id="GO:0005737">
    <property type="term" value="C:cytoplasm"/>
    <property type="evidence" value="ECO:0007669"/>
    <property type="project" value="UniProtKB-SubCell"/>
</dbReference>
<dbReference type="GO" id="GO:0000287">
    <property type="term" value="F:magnesium ion binding"/>
    <property type="evidence" value="ECO:0007669"/>
    <property type="project" value="UniProtKB-UniRule"/>
</dbReference>
<dbReference type="GO" id="GO:0009045">
    <property type="term" value="F:xylose isomerase activity"/>
    <property type="evidence" value="ECO:0007669"/>
    <property type="project" value="UniProtKB-UniRule"/>
</dbReference>
<dbReference type="GO" id="GO:0042732">
    <property type="term" value="P:D-xylose metabolic process"/>
    <property type="evidence" value="ECO:0007669"/>
    <property type="project" value="UniProtKB-UniRule"/>
</dbReference>
<dbReference type="FunFam" id="3.20.20.150:FF:000002">
    <property type="entry name" value="Xylose isomerase"/>
    <property type="match status" value="1"/>
</dbReference>
<dbReference type="Gene3D" id="3.20.20.150">
    <property type="entry name" value="Divalent-metal-dependent TIM barrel enzymes"/>
    <property type="match status" value="1"/>
</dbReference>
<dbReference type="HAMAP" id="MF_00455">
    <property type="entry name" value="Xylose_isom_A"/>
    <property type="match status" value="1"/>
</dbReference>
<dbReference type="InterPro" id="IPR036237">
    <property type="entry name" value="Xyl_isomerase-like_sf"/>
</dbReference>
<dbReference type="InterPro" id="IPR013452">
    <property type="entry name" value="Xylose_isom_bac"/>
</dbReference>
<dbReference type="InterPro" id="IPR001998">
    <property type="entry name" value="Xylose_isomerase"/>
</dbReference>
<dbReference type="NCBIfam" id="NF003998">
    <property type="entry name" value="PRK05474.1"/>
    <property type="match status" value="1"/>
</dbReference>
<dbReference type="NCBIfam" id="TIGR02630">
    <property type="entry name" value="xylose_isom_A"/>
    <property type="match status" value="1"/>
</dbReference>
<dbReference type="PANTHER" id="PTHR48408">
    <property type="match status" value="1"/>
</dbReference>
<dbReference type="PANTHER" id="PTHR48408:SF1">
    <property type="entry name" value="XYLOSE ISOMERASE"/>
    <property type="match status" value="1"/>
</dbReference>
<dbReference type="PRINTS" id="PR00688">
    <property type="entry name" value="XYLOSISMRASE"/>
</dbReference>
<dbReference type="SUPFAM" id="SSF51658">
    <property type="entry name" value="Xylose isomerase-like"/>
    <property type="match status" value="1"/>
</dbReference>
<dbReference type="PROSITE" id="PS51415">
    <property type="entry name" value="XYLOSE_ISOMERASE"/>
    <property type="match status" value="1"/>
</dbReference>
<keyword id="KW-0119">Carbohydrate metabolism</keyword>
<keyword id="KW-0963">Cytoplasm</keyword>
<keyword id="KW-0413">Isomerase</keyword>
<keyword id="KW-0460">Magnesium</keyword>
<keyword id="KW-0479">Metal-binding</keyword>
<keyword id="KW-1185">Reference proteome</keyword>
<keyword id="KW-0859">Xylose metabolism</keyword>
<proteinExistence type="inferred from homology"/>
<evidence type="ECO:0000255" key="1">
    <source>
        <dbReference type="HAMAP-Rule" id="MF_00455"/>
    </source>
</evidence>
<evidence type="ECO:0000305" key="2"/>
<gene>
    <name evidence="1" type="primary">xylA</name>
    <name type="ordered locus">c4385</name>
</gene>
<feature type="chain" id="PRO_0000195776" description="Xylose isomerase">
    <location>
        <begin position="1"/>
        <end position="440"/>
    </location>
</feature>
<feature type="active site" evidence="1">
    <location>
        <position position="101"/>
    </location>
</feature>
<feature type="active site" evidence="1">
    <location>
        <position position="104"/>
    </location>
</feature>
<feature type="binding site" evidence="1">
    <location>
        <position position="232"/>
    </location>
    <ligand>
        <name>Mg(2+)</name>
        <dbReference type="ChEBI" id="CHEBI:18420"/>
        <label>1</label>
    </ligand>
</feature>
<feature type="binding site" evidence="1">
    <location>
        <position position="268"/>
    </location>
    <ligand>
        <name>Mg(2+)</name>
        <dbReference type="ChEBI" id="CHEBI:18420"/>
        <label>1</label>
    </ligand>
</feature>
<feature type="binding site" evidence="1">
    <location>
        <position position="268"/>
    </location>
    <ligand>
        <name>Mg(2+)</name>
        <dbReference type="ChEBI" id="CHEBI:18420"/>
        <label>2</label>
    </ligand>
</feature>
<feature type="binding site" evidence="1">
    <location>
        <position position="271"/>
    </location>
    <ligand>
        <name>Mg(2+)</name>
        <dbReference type="ChEBI" id="CHEBI:18420"/>
        <label>2</label>
    </ligand>
</feature>
<feature type="binding site" evidence="1">
    <location>
        <position position="296"/>
    </location>
    <ligand>
        <name>Mg(2+)</name>
        <dbReference type="ChEBI" id="CHEBI:18420"/>
        <label>1</label>
    </ligand>
</feature>
<feature type="binding site" evidence="1">
    <location>
        <position position="307"/>
    </location>
    <ligand>
        <name>Mg(2+)</name>
        <dbReference type="ChEBI" id="CHEBI:18420"/>
        <label>2</label>
    </ligand>
</feature>
<feature type="binding site" evidence="1">
    <location>
        <position position="309"/>
    </location>
    <ligand>
        <name>Mg(2+)</name>
        <dbReference type="ChEBI" id="CHEBI:18420"/>
        <label>2</label>
    </ligand>
</feature>
<feature type="binding site" evidence="1">
    <location>
        <position position="339"/>
    </location>
    <ligand>
        <name>Mg(2+)</name>
        <dbReference type="ChEBI" id="CHEBI:18420"/>
        <label>1</label>
    </ligand>
</feature>
<sequence length="440" mass="49719">MQAYFDQLDRVRYEGSKSSNPLAFRHYNPDELVLGKRMEEHLRFAACYWHTFCWNGADMFGVGAFNRPWQQPGEALALAKRKADVAFEFFHKLHVPFYCFHDVDVSPEGASLKEYINNFAQMVDVLAGKQEESGVKLLWGTANCFTNPRYGAGAATNPDPEVFSWAATQVVTAMEATHKLGGENYVLWGGREGYETLLNTDLRQEREQLGRFMQMVVEHKHKIGFQGTLLIEPKPQEPTKHQYDYDAATVYGFLKQFGLEKEIKLNIEANHATLAGHSFHHEIATAIALGLFGSVDANRGDAQLGWDTDQFPNSVEENALVMYEILKAGGFTTGGLNFDAKVRRQSTDKYDLFYGHIGAMDTMALALKIAARMIEDGELDKRIAQRYSGWNSELGQQILKGQMSLADLAKYAQEHNLSPVHQSGRQEQLENLVNHYLFDK</sequence>
<accession>Q8FCE3</accession>
<reference key="1">
    <citation type="journal article" date="2002" name="Proc. Natl. Acad. Sci. U.S.A.">
        <title>Extensive mosaic structure revealed by the complete genome sequence of uropathogenic Escherichia coli.</title>
        <authorList>
            <person name="Welch R.A."/>
            <person name="Burland V."/>
            <person name="Plunkett G. III"/>
            <person name="Redford P."/>
            <person name="Roesch P."/>
            <person name="Rasko D."/>
            <person name="Buckles E.L."/>
            <person name="Liou S.-R."/>
            <person name="Boutin A."/>
            <person name="Hackett J."/>
            <person name="Stroud D."/>
            <person name="Mayhew G.F."/>
            <person name="Rose D.J."/>
            <person name="Zhou S."/>
            <person name="Schwartz D.C."/>
            <person name="Perna N.T."/>
            <person name="Mobley H.L.T."/>
            <person name="Donnenberg M.S."/>
            <person name="Blattner F.R."/>
        </authorList>
    </citation>
    <scope>NUCLEOTIDE SEQUENCE [LARGE SCALE GENOMIC DNA]</scope>
    <source>
        <strain>CFT073 / ATCC 700928 / UPEC</strain>
    </source>
</reference>
<protein>
    <recommendedName>
        <fullName evidence="1">Xylose isomerase</fullName>
        <ecNumber evidence="1">5.3.1.5</ecNumber>
    </recommendedName>
</protein>
<comment type="catalytic activity">
    <reaction evidence="1">
        <text>alpha-D-xylose = alpha-D-xylulofuranose</text>
        <dbReference type="Rhea" id="RHEA:22816"/>
        <dbReference type="ChEBI" id="CHEBI:28518"/>
        <dbReference type="ChEBI" id="CHEBI:188998"/>
        <dbReference type="EC" id="5.3.1.5"/>
    </reaction>
</comment>
<comment type="cofactor">
    <cofactor evidence="1">
        <name>Mg(2+)</name>
        <dbReference type="ChEBI" id="CHEBI:18420"/>
    </cofactor>
    <text evidence="1">Binds 2 magnesium ions per subunit.</text>
</comment>
<comment type="subunit">
    <text evidence="1">Homotetramer.</text>
</comment>
<comment type="subcellular location">
    <subcellularLocation>
        <location evidence="1">Cytoplasm</location>
    </subcellularLocation>
</comment>
<comment type="similarity">
    <text evidence="1">Belongs to the xylose isomerase family.</text>
</comment>
<comment type="sequence caution" evidence="2">
    <conflict type="erroneous initiation">
        <sequence resource="EMBL-CDS" id="AAN82821"/>
    </conflict>
</comment>
<organism>
    <name type="scientific">Escherichia coli O6:H1 (strain CFT073 / ATCC 700928 / UPEC)</name>
    <dbReference type="NCBI Taxonomy" id="199310"/>
    <lineage>
        <taxon>Bacteria</taxon>
        <taxon>Pseudomonadati</taxon>
        <taxon>Pseudomonadota</taxon>
        <taxon>Gammaproteobacteria</taxon>
        <taxon>Enterobacterales</taxon>
        <taxon>Enterobacteriaceae</taxon>
        <taxon>Escherichia</taxon>
    </lineage>
</organism>
<name>XYLA_ECOL6</name>